<protein>
    <recommendedName>
        <fullName>D-arabinitol 2-dehydrogenase [ribulose-forming]</fullName>
        <shortName>ARDH</shortName>
        <ecNumber evidence="4 5">1.1.1.250</ecNumber>
    </recommendedName>
</protein>
<organism>
    <name type="scientific">Candida tropicalis</name>
    <name type="common">Yeast</name>
    <dbReference type="NCBI Taxonomy" id="5482"/>
    <lineage>
        <taxon>Eukaryota</taxon>
        <taxon>Fungi</taxon>
        <taxon>Dikarya</taxon>
        <taxon>Ascomycota</taxon>
        <taxon>Saccharomycotina</taxon>
        <taxon>Pichiomycetes</taxon>
        <taxon>Debaryomycetaceae</taxon>
        <taxon>Candida/Lodderomyces clade</taxon>
        <taxon>Candida</taxon>
    </lineage>
</organism>
<reference key="1">
    <citation type="journal article" date="1995" name="Gene">
        <title>Isolation, characterization and expression of the gene that encodes D-arabinitol dehydrogenase in Candida tropicalis.</title>
        <authorList>
            <person name="Murray J.S."/>
            <person name="Wong M.L."/>
            <person name="Miyada C.G."/>
            <person name="Switchenko A.C."/>
            <person name="Goodman T.C."/>
            <person name="Wong B."/>
        </authorList>
    </citation>
    <scope>NUCLEOTIDE SEQUENCE [GENOMIC DNA]</scope>
    <scope>PROTEIN SEQUENCE OF 110-129; 198-209 AND 225-234</scope>
    <scope>FUNCTION</scope>
    <scope>CATALYTIC ACTIVITY</scope>
    <scope>PATHWAY</scope>
    <source>
        <strain>ATCC 750 / CBS 94 / DSM 11953 / JCM 1541 / NBRC 1400</strain>
    </source>
</reference>
<reference key="2">
    <citation type="journal article" date="1993" name="Biochem. Biophys. Res. Commun.">
        <title>Identification, purification, and characterization of a D-arabinitol-specific dehydrogenase from Candida tropicalis.</title>
        <authorList>
            <person name="Quong M.W."/>
            <person name="Miyada C.G."/>
            <person name="Switchenko A.C."/>
            <person name="Goodman T.C."/>
        </authorList>
    </citation>
    <scope>FUNCTION</scope>
    <scope>CATALYTIC ACTIVITY</scope>
    <scope>PATHWAY</scope>
    <scope>BIOPHYSICOCHEMICAL PROPERTIES</scope>
</reference>
<dbReference type="EC" id="1.1.1.250" evidence="4 5"/>
<dbReference type="EMBL" id="U00675">
    <property type="protein sequence ID" value="AAA66355.1"/>
    <property type="molecule type" value="Genomic_DNA"/>
</dbReference>
<dbReference type="PIR" id="JC4041">
    <property type="entry name" value="JC4041"/>
</dbReference>
<dbReference type="SMR" id="P50166"/>
<dbReference type="EnsemblFungi" id="CTRG_03026-t43_1">
    <property type="protein sequence ID" value="CTRG_03026-t43_1-p1"/>
    <property type="gene ID" value="CTRG_03026"/>
</dbReference>
<dbReference type="VEuPathDB" id="FungiDB:CTMYA2_042940"/>
<dbReference type="VEuPathDB" id="FungiDB:CTRG_03026"/>
<dbReference type="UniPathway" id="UPA00380"/>
<dbReference type="GO" id="GO:0047038">
    <property type="term" value="F:D-arabinitol 2-dehydrogenase activity"/>
    <property type="evidence" value="ECO:0000314"/>
    <property type="project" value="UniProtKB"/>
</dbReference>
<dbReference type="GO" id="GO:0051161">
    <property type="term" value="P:arabitol metabolic process"/>
    <property type="evidence" value="ECO:0007669"/>
    <property type="project" value="UniProtKB-UniPathway"/>
</dbReference>
<dbReference type="GO" id="GO:0005975">
    <property type="term" value="P:carbohydrate metabolic process"/>
    <property type="evidence" value="ECO:0000314"/>
    <property type="project" value="UniProtKB"/>
</dbReference>
<dbReference type="FunFam" id="3.40.50.720:FF:000240">
    <property type="entry name" value="SDR family oxidoreductase"/>
    <property type="match status" value="1"/>
</dbReference>
<dbReference type="Gene3D" id="3.40.50.720">
    <property type="entry name" value="NAD(P)-binding Rossmann-like Domain"/>
    <property type="match status" value="1"/>
</dbReference>
<dbReference type="InterPro" id="IPR036291">
    <property type="entry name" value="NAD(P)-bd_dom_sf"/>
</dbReference>
<dbReference type="InterPro" id="IPR020904">
    <property type="entry name" value="Sc_DH/Rdtase_CS"/>
</dbReference>
<dbReference type="InterPro" id="IPR002347">
    <property type="entry name" value="SDR_fam"/>
</dbReference>
<dbReference type="PANTHER" id="PTHR42760:SF115">
    <property type="entry name" value="3-OXOACYL-[ACYL-CARRIER-PROTEIN] REDUCTASE FABG"/>
    <property type="match status" value="1"/>
</dbReference>
<dbReference type="PANTHER" id="PTHR42760">
    <property type="entry name" value="SHORT-CHAIN DEHYDROGENASES/REDUCTASES FAMILY MEMBER"/>
    <property type="match status" value="1"/>
</dbReference>
<dbReference type="Pfam" id="PF13561">
    <property type="entry name" value="adh_short_C2"/>
    <property type="match status" value="1"/>
</dbReference>
<dbReference type="PRINTS" id="PR00081">
    <property type="entry name" value="GDHRDH"/>
</dbReference>
<dbReference type="PRINTS" id="PR00080">
    <property type="entry name" value="SDRFAMILY"/>
</dbReference>
<dbReference type="SUPFAM" id="SSF51735">
    <property type="entry name" value="NAD(P)-binding Rossmann-fold domains"/>
    <property type="match status" value="1"/>
</dbReference>
<dbReference type="PROSITE" id="PS00061">
    <property type="entry name" value="ADH_SHORT"/>
    <property type="match status" value="1"/>
</dbReference>
<evidence type="ECO:0000250" key="1">
    <source>
        <dbReference type="UniProtKB" id="L0E2Z4"/>
    </source>
</evidence>
<evidence type="ECO:0000250" key="2">
    <source>
        <dbReference type="UniProtKB" id="O93868"/>
    </source>
</evidence>
<evidence type="ECO:0000255" key="3">
    <source>
        <dbReference type="PROSITE-ProRule" id="PRU10001"/>
    </source>
</evidence>
<evidence type="ECO:0000269" key="4">
    <source>
    </source>
</evidence>
<evidence type="ECO:0000269" key="5">
    <source>
    </source>
</evidence>
<evidence type="ECO:0000305" key="6"/>
<evidence type="ECO:0000305" key="7">
    <source>
    </source>
</evidence>
<evidence type="ECO:0000305" key="8">
    <source>
    </source>
</evidence>
<name>ARDH_CANTR</name>
<proteinExistence type="evidence at protein level"/>
<feature type="chain" id="PRO_0000054518" description="D-arabinitol 2-dehydrogenase [ribulose-forming]">
    <location>
        <begin position="1"/>
        <end position="282"/>
    </location>
</feature>
<feature type="active site" description="Proton donor" evidence="2">
    <location>
        <position position="170"/>
    </location>
</feature>
<feature type="active site" description="Proton acceptor" evidence="3">
    <location>
        <position position="185"/>
    </location>
</feature>
<feature type="active site" description="Lowers pKa of active site Tyr" evidence="2">
    <location>
        <position position="189"/>
    </location>
</feature>
<feature type="binding site" evidence="1">
    <location>
        <position position="32"/>
    </location>
    <ligand>
        <name>NADP(+)</name>
        <dbReference type="ChEBI" id="CHEBI:58349"/>
    </ligand>
</feature>
<feature type="binding site" evidence="1">
    <location>
        <position position="53"/>
    </location>
    <ligand>
        <name>NADP(+)</name>
        <dbReference type="ChEBI" id="CHEBI:58349"/>
    </ligand>
</feature>
<feature type="binding site" evidence="2">
    <location>
        <position position="185"/>
    </location>
    <ligand>
        <name>NADP(+)</name>
        <dbReference type="ChEBI" id="CHEBI:58349"/>
    </ligand>
</feature>
<feature type="binding site" evidence="2">
    <location>
        <position position="189"/>
    </location>
    <ligand>
        <name>NADP(+)</name>
        <dbReference type="ChEBI" id="CHEBI:58349"/>
    </ligand>
</feature>
<feature type="binding site" evidence="2">
    <location>
        <position position="218"/>
    </location>
    <ligand>
        <name>NADP(+)</name>
        <dbReference type="ChEBI" id="CHEBI:58349"/>
    </ligand>
</feature>
<feature type="binding site" evidence="1">
    <location>
        <position position="220"/>
    </location>
    <ligand>
        <name>NADP(+)</name>
        <dbReference type="ChEBI" id="CHEBI:58349"/>
    </ligand>
</feature>
<gene>
    <name type="primary">ARD</name>
</gene>
<comment type="function">
    <text evidence="4 5">Catalyzes the NAD(+)-dependent oxidation of D-arabinitol at carbon 4 to produce D-ribulose.</text>
</comment>
<comment type="catalytic activity">
    <reaction evidence="4 5">
        <text>D-arabinitol + NAD(+) = D-ribulose + NADH + H(+)</text>
        <dbReference type="Rhea" id="RHEA:17389"/>
        <dbReference type="ChEBI" id="CHEBI:15378"/>
        <dbReference type="ChEBI" id="CHEBI:17173"/>
        <dbReference type="ChEBI" id="CHEBI:18333"/>
        <dbReference type="ChEBI" id="CHEBI:57540"/>
        <dbReference type="ChEBI" id="CHEBI:57945"/>
        <dbReference type="EC" id="1.1.1.250"/>
    </reaction>
    <physiologicalReaction direction="left-to-right" evidence="8">
        <dbReference type="Rhea" id="RHEA:17390"/>
    </physiologicalReaction>
</comment>
<comment type="biophysicochemical properties">
    <kinetics>
        <KM evidence="5">2.2 mM for D-arabinitol (at pH 9.5 and 25 degrees Celsius)</KM>
        <KM evidence="5">39.8 mM for NAD(+) (at pH 9.5 and 25 degrees Celsius)</KM>
    </kinetics>
</comment>
<comment type="pathway">
    <text evidence="7 8">Carbohydrate metabolism; D-arabinitol metabolism.</text>
</comment>
<comment type="similarity">
    <text evidence="6">Belongs to the short-chain dehydrogenases/reductases (SDR) family.</text>
</comment>
<accession>P50166</accession>
<sequence length="282" mass="30748">MDSSSYWSYDNIVPSFRLDGKLVIITGGSGGLSAVVSRALLAKGADIALIDMNLERTQQAARDVLQWGEEQMKGKHESPIGQVSAWSCNIGDAEAVELTFKAINEHHGKVASVLINTAGYAENFPAEEYPAKNAENIMKVNGLGSFYVSQAFARPLIQNNMTGSIILIGSMSGTIVNDPQPQCMYNMSKAGVIHLARSLACEWAKYNIRVNTLSPGYILTPLTRNVISGHTEMKTEWESKIPMKRMAEPKEFVGSILYLASDSASSYTTGHNLVVDGGYECW</sequence>
<keyword id="KW-0903">Direct protein sequencing</keyword>
<keyword id="KW-0521">NADP</keyword>
<keyword id="KW-0560">Oxidoreductase</keyword>